<accession>B7LH87</accession>
<keyword id="KW-0235">DNA replication</keyword>
<keyword id="KW-1185">Reference proteome</keyword>
<organism>
    <name type="scientific">Escherichia coli (strain 55989 / EAEC)</name>
    <dbReference type="NCBI Taxonomy" id="585055"/>
    <lineage>
        <taxon>Bacteria</taxon>
        <taxon>Pseudomonadati</taxon>
        <taxon>Pseudomonadota</taxon>
        <taxon>Gammaproteobacteria</taxon>
        <taxon>Enterobacterales</taxon>
        <taxon>Enterobacteriaceae</taxon>
        <taxon>Escherichia</taxon>
    </lineage>
</organism>
<evidence type="ECO:0000255" key="1">
    <source>
        <dbReference type="HAMAP-Rule" id="MF_01157"/>
    </source>
</evidence>
<comment type="function">
    <text evidence="1">Required for the timely initiation of chromosomal replication via direct interactions with the DnaA initiator protein.</text>
</comment>
<comment type="subunit">
    <text evidence="1">Homotetramer; dimer of dimers.</text>
</comment>
<comment type="similarity">
    <text evidence="1">Belongs to the SIS family. DiaA subfamily.</text>
</comment>
<gene>
    <name evidence="1" type="primary">diaA</name>
    <name type="ordered locus">EC55989_3569</name>
</gene>
<protein>
    <recommendedName>
        <fullName evidence="1">DnaA initiator-associating protein DiaA</fullName>
    </recommendedName>
</protein>
<reference key="1">
    <citation type="journal article" date="2009" name="PLoS Genet.">
        <title>Organised genome dynamics in the Escherichia coli species results in highly diverse adaptive paths.</title>
        <authorList>
            <person name="Touchon M."/>
            <person name="Hoede C."/>
            <person name="Tenaillon O."/>
            <person name="Barbe V."/>
            <person name="Baeriswyl S."/>
            <person name="Bidet P."/>
            <person name="Bingen E."/>
            <person name="Bonacorsi S."/>
            <person name="Bouchier C."/>
            <person name="Bouvet O."/>
            <person name="Calteau A."/>
            <person name="Chiapello H."/>
            <person name="Clermont O."/>
            <person name="Cruveiller S."/>
            <person name="Danchin A."/>
            <person name="Diard M."/>
            <person name="Dossat C."/>
            <person name="Karoui M.E."/>
            <person name="Frapy E."/>
            <person name="Garry L."/>
            <person name="Ghigo J.M."/>
            <person name="Gilles A.M."/>
            <person name="Johnson J."/>
            <person name="Le Bouguenec C."/>
            <person name="Lescat M."/>
            <person name="Mangenot S."/>
            <person name="Martinez-Jehanne V."/>
            <person name="Matic I."/>
            <person name="Nassif X."/>
            <person name="Oztas S."/>
            <person name="Petit M.A."/>
            <person name="Pichon C."/>
            <person name="Rouy Z."/>
            <person name="Ruf C.S."/>
            <person name="Schneider D."/>
            <person name="Tourret J."/>
            <person name="Vacherie B."/>
            <person name="Vallenet D."/>
            <person name="Medigue C."/>
            <person name="Rocha E.P.C."/>
            <person name="Denamur E."/>
        </authorList>
    </citation>
    <scope>NUCLEOTIDE SEQUENCE [LARGE SCALE GENOMIC DNA]</scope>
    <source>
        <strain>55989 / EAEC</strain>
    </source>
</reference>
<feature type="chain" id="PRO_1000164294" description="DnaA initiator-associating protein DiaA">
    <location>
        <begin position="1"/>
        <end position="196"/>
    </location>
</feature>
<feature type="domain" description="SIS" evidence="1">
    <location>
        <begin position="34"/>
        <end position="196"/>
    </location>
</feature>
<dbReference type="EMBL" id="CU928145">
    <property type="protein sequence ID" value="CAU99765.1"/>
    <property type="molecule type" value="Genomic_DNA"/>
</dbReference>
<dbReference type="RefSeq" id="WP_001158035.1">
    <property type="nucleotide sequence ID" value="NZ_CP028304.1"/>
</dbReference>
<dbReference type="SMR" id="B7LH87"/>
<dbReference type="GeneID" id="75206004"/>
<dbReference type="KEGG" id="eck:EC55989_3569"/>
<dbReference type="HOGENOM" id="CLU_080999_3_1_6"/>
<dbReference type="Proteomes" id="UP000000746">
    <property type="component" value="Chromosome"/>
</dbReference>
<dbReference type="GO" id="GO:0097367">
    <property type="term" value="F:carbohydrate derivative binding"/>
    <property type="evidence" value="ECO:0007669"/>
    <property type="project" value="InterPro"/>
</dbReference>
<dbReference type="GO" id="GO:1901135">
    <property type="term" value="P:carbohydrate derivative metabolic process"/>
    <property type="evidence" value="ECO:0007669"/>
    <property type="project" value="InterPro"/>
</dbReference>
<dbReference type="GO" id="GO:0006260">
    <property type="term" value="P:DNA replication"/>
    <property type="evidence" value="ECO:0007669"/>
    <property type="project" value="UniProtKB-UniRule"/>
</dbReference>
<dbReference type="CDD" id="cd05006">
    <property type="entry name" value="SIS_GmhA"/>
    <property type="match status" value="1"/>
</dbReference>
<dbReference type="FunFam" id="3.40.50.10490:FF:000006">
    <property type="entry name" value="DnaA initiator-associating protein DiaA"/>
    <property type="match status" value="1"/>
</dbReference>
<dbReference type="Gene3D" id="3.40.50.10490">
    <property type="entry name" value="Glucose-6-phosphate isomerase like protein, domain 1"/>
    <property type="match status" value="1"/>
</dbReference>
<dbReference type="HAMAP" id="MF_01157">
    <property type="entry name" value="SIS_DiaA"/>
    <property type="match status" value="1"/>
</dbReference>
<dbReference type="InterPro" id="IPR023070">
    <property type="entry name" value="DiaA"/>
</dbReference>
<dbReference type="InterPro" id="IPR035461">
    <property type="entry name" value="GmhA/DiaA"/>
</dbReference>
<dbReference type="InterPro" id="IPR001347">
    <property type="entry name" value="SIS_dom"/>
</dbReference>
<dbReference type="InterPro" id="IPR046348">
    <property type="entry name" value="SIS_dom_sf"/>
</dbReference>
<dbReference type="InterPro" id="IPR050099">
    <property type="entry name" value="SIS_GmhA/DiaA_subfam"/>
</dbReference>
<dbReference type="NCBIfam" id="NF008138">
    <property type="entry name" value="PRK10886.1"/>
    <property type="match status" value="1"/>
</dbReference>
<dbReference type="NCBIfam" id="NF010546">
    <property type="entry name" value="PRK13936.1"/>
    <property type="match status" value="1"/>
</dbReference>
<dbReference type="PANTHER" id="PTHR30390:SF6">
    <property type="entry name" value="DNAA INITIATOR-ASSOCIATING PROTEIN DIAA"/>
    <property type="match status" value="1"/>
</dbReference>
<dbReference type="PANTHER" id="PTHR30390">
    <property type="entry name" value="SEDOHEPTULOSE 7-PHOSPHATE ISOMERASE / DNAA INITIATOR-ASSOCIATING FACTOR FOR REPLICATION INITIATION"/>
    <property type="match status" value="1"/>
</dbReference>
<dbReference type="Pfam" id="PF13580">
    <property type="entry name" value="SIS_2"/>
    <property type="match status" value="1"/>
</dbReference>
<dbReference type="SUPFAM" id="SSF53697">
    <property type="entry name" value="SIS domain"/>
    <property type="match status" value="1"/>
</dbReference>
<dbReference type="PROSITE" id="PS51464">
    <property type="entry name" value="SIS"/>
    <property type="match status" value="1"/>
</dbReference>
<name>DIAA_ECO55</name>
<sequence length="196" mass="21090">MQERIKACFTESIQTQIAAAEALPDAISRAAMTLVQSLLNGNKILCCGNGTSAANAQHFAASMINRFETERPSLPAIALNTDNVVLTAIANDRLHDEVYAKQVRALGHAGDVLLAISTRGNSRDIVKAVEAAVTRDMTIVALTGYDGGELAGLLGPQDVEIRIPSHRSARIQEMHMLTVNCLCDLIDNTLFPHQDV</sequence>
<proteinExistence type="inferred from homology"/>